<accession>Q8R409</accession>
<keyword id="KW-0175">Coiled coil</keyword>
<keyword id="KW-0963">Cytoplasm</keyword>
<keyword id="KW-0391">Immunity</keyword>
<keyword id="KW-0399">Innate immunity</keyword>
<keyword id="KW-0539">Nucleus</keyword>
<keyword id="KW-0597">Phosphoprotein</keyword>
<keyword id="KW-1185">Reference proteome</keyword>
<keyword id="KW-0678">Repressor</keyword>
<keyword id="KW-0804">Transcription</keyword>
<keyword id="KW-0805">Transcription regulation</keyword>
<comment type="function">
    <text evidence="2">Transcriptional regulator which functions as a general RNA polymerase II transcription inhibitor. Core component of the 7SK RNP complex: in cooperation with 7SK snRNA sequesters P-TEFb in a large inactive 7SK snRNP complex preventing RNA polymerase II phosphorylation and subsequent transcriptional elongation. May also regulate NF-kappa-B, ESR1, NR3C1 and CIITA-dependent transcriptional activity. Plays a role in the regulation of DNA virus-mediated innate immune response by assembling into the HDP-RNP complex, a complex that serves as a platform for IRF3 phosphorylation and subsequent innate immune response activation through the cGAS-STING pathway.</text>
</comment>
<comment type="subunit">
    <text evidence="2">Homooligomer and heterooligomer with HEXIM2; probably dimeric. Core component of the 7SK RNP complex, at least composed of 7SK RNA, LARP7, MEPCE, HEXIM1 (or HEXIM2) and P-TEFb (composed of CDK9 and CCNT1/cyclin-T1). Interacts with the N-CoR complex through NCOR1. Interacts with ESR1 and NR3C1. May interact with NF-kappa-B through RELA. Interacts with CCNT2; mediates formation of a tripartite complex with KPNA2. Part of the HDP-RNP complex composed of at least HEXIM1, PRKDC, XRCC5, XRCC6, paraspeckle proteins (SFPQ, NONO, PSPC1, RBM14, and MATR3) and NEAT1 non-coding RNA.</text>
</comment>
<comment type="interaction">
    <interactant intactId="EBI-6261031">
        <id>Q8R409</id>
    </interactant>
    <interactant intactId="EBI-2550360">
        <id>Q6PDM2</id>
        <label>Srsf1</label>
    </interactant>
    <organismsDiffer>false</organismsDiffer>
    <experiments>4</experiments>
</comment>
<comment type="interaction">
    <interactant intactId="EBI-6261031">
        <id>Q8R409</id>
    </interactant>
    <interactant intactId="EBI-2550402">
        <id>Q62093</id>
        <label>Srsf2</label>
    </interactant>
    <organismsDiffer>false</organismsDiffer>
    <experiments>4</experiments>
</comment>
<comment type="subcellular location">
    <subcellularLocation>
        <location evidence="2">Nucleus</location>
    </subcellularLocation>
    <subcellularLocation>
        <location evidence="2">Cytoplasm</location>
    </subcellularLocation>
    <text evidence="2">Binds alpha-importin and is mostly nuclear.</text>
</comment>
<comment type="tissue specificity">
    <text evidence="5">Widely expressed with higher expression in heart, skeletal muscle and brain (at protein level).</text>
</comment>
<comment type="induction">
    <text evidence="5">Up-regulated by HMBA (hexamethylene bisacetamide).</text>
</comment>
<comment type="domain">
    <text evidence="1">The coiled-coil domain mediates oligomerization.</text>
</comment>
<comment type="similarity">
    <text evidence="7">Belongs to the HEXIM family.</text>
</comment>
<protein>
    <recommendedName>
        <fullName>Protein HEXIM1</fullName>
    </recommendedName>
    <alternativeName>
        <fullName evidence="6">Cardiac lineage protein 1</fullName>
    </alternativeName>
</protein>
<sequence length="356" mass="40243">MAEPLLTEHQHQPQTSNCTGAAVVHEEHTSERPPSAEERVPKEDSRWQSRASLQSGSRPGQEGEGGLKHQLPPLQTNACPELSSLEKGEKGQNGEDLSTGGASPSAEGEPMSESLVQPGHDSEATKQEAPAAGGEEPWGQQQRQLGKKKHRRRPSKKKRHWKPYYKLTWEEKKKFDEKQSLRASRVRAEMFAKGQPVAPYNTTQFLMDDHDQEEPDLKTGLYPKRAAAKSDDTSDEDFVEEAGEEDGGSDGMGGDGSEFLQRDFSETYERYHAESLQNMSKQELIKEYLELEKCLSRKEDENNRLRLESKRLGGVDARVRELELELDRLRAENLQLLTENELHRQQERAPLSKFGD</sequence>
<organism>
    <name type="scientific">Mus musculus</name>
    <name type="common">Mouse</name>
    <dbReference type="NCBI Taxonomy" id="10090"/>
    <lineage>
        <taxon>Eukaryota</taxon>
        <taxon>Metazoa</taxon>
        <taxon>Chordata</taxon>
        <taxon>Craniata</taxon>
        <taxon>Vertebrata</taxon>
        <taxon>Euteleostomi</taxon>
        <taxon>Mammalia</taxon>
        <taxon>Eutheria</taxon>
        <taxon>Euarchontoglires</taxon>
        <taxon>Glires</taxon>
        <taxon>Rodentia</taxon>
        <taxon>Myomorpha</taxon>
        <taxon>Muroidea</taxon>
        <taxon>Muridae</taxon>
        <taxon>Murinae</taxon>
        <taxon>Mus</taxon>
        <taxon>Mus</taxon>
    </lineage>
</organism>
<name>HEXI1_MOUSE</name>
<proteinExistence type="evidence at protein level"/>
<reference key="1">
    <citation type="journal article" date="2002" name="Gene">
        <title>Structure, expression, and functional characterization of the mouse CLP-1 gene.</title>
        <authorList>
            <person name="Huang F."/>
            <person name="Wagner M."/>
            <person name="Siddiqui M.A.Q."/>
        </authorList>
    </citation>
    <scope>NUCLEOTIDE SEQUENCE [MRNA]</scope>
    <scope>TISSUE SPECIFICITY</scope>
    <scope>INDUCTION</scope>
    <source>
        <strain>129/SvJ</strain>
        <tissue>Embryonic heart</tissue>
    </source>
</reference>
<reference key="2">
    <citation type="journal article" date="2005" name="Science">
        <title>The transcriptional landscape of the mammalian genome.</title>
        <authorList>
            <person name="Carninci P."/>
            <person name="Kasukawa T."/>
            <person name="Katayama S."/>
            <person name="Gough J."/>
            <person name="Frith M.C."/>
            <person name="Maeda N."/>
            <person name="Oyama R."/>
            <person name="Ravasi T."/>
            <person name="Lenhard B."/>
            <person name="Wells C."/>
            <person name="Kodzius R."/>
            <person name="Shimokawa K."/>
            <person name="Bajic V.B."/>
            <person name="Brenner S.E."/>
            <person name="Batalov S."/>
            <person name="Forrest A.R."/>
            <person name="Zavolan M."/>
            <person name="Davis M.J."/>
            <person name="Wilming L.G."/>
            <person name="Aidinis V."/>
            <person name="Allen J.E."/>
            <person name="Ambesi-Impiombato A."/>
            <person name="Apweiler R."/>
            <person name="Aturaliya R.N."/>
            <person name="Bailey T.L."/>
            <person name="Bansal M."/>
            <person name="Baxter L."/>
            <person name="Beisel K.W."/>
            <person name="Bersano T."/>
            <person name="Bono H."/>
            <person name="Chalk A.M."/>
            <person name="Chiu K.P."/>
            <person name="Choudhary V."/>
            <person name="Christoffels A."/>
            <person name="Clutterbuck D.R."/>
            <person name="Crowe M.L."/>
            <person name="Dalla E."/>
            <person name="Dalrymple B.P."/>
            <person name="de Bono B."/>
            <person name="Della Gatta G."/>
            <person name="di Bernardo D."/>
            <person name="Down T."/>
            <person name="Engstrom P."/>
            <person name="Fagiolini M."/>
            <person name="Faulkner G."/>
            <person name="Fletcher C.F."/>
            <person name="Fukushima T."/>
            <person name="Furuno M."/>
            <person name="Futaki S."/>
            <person name="Gariboldi M."/>
            <person name="Georgii-Hemming P."/>
            <person name="Gingeras T.R."/>
            <person name="Gojobori T."/>
            <person name="Green R.E."/>
            <person name="Gustincich S."/>
            <person name="Harbers M."/>
            <person name="Hayashi Y."/>
            <person name="Hensch T.K."/>
            <person name="Hirokawa N."/>
            <person name="Hill D."/>
            <person name="Huminiecki L."/>
            <person name="Iacono M."/>
            <person name="Ikeo K."/>
            <person name="Iwama A."/>
            <person name="Ishikawa T."/>
            <person name="Jakt M."/>
            <person name="Kanapin A."/>
            <person name="Katoh M."/>
            <person name="Kawasawa Y."/>
            <person name="Kelso J."/>
            <person name="Kitamura H."/>
            <person name="Kitano H."/>
            <person name="Kollias G."/>
            <person name="Krishnan S.P."/>
            <person name="Kruger A."/>
            <person name="Kummerfeld S.K."/>
            <person name="Kurochkin I.V."/>
            <person name="Lareau L.F."/>
            <person name="Lazarevic D."/>
            <person name="Lipovich L."/>
            <person name="Liu J."/>
            <person name="Liuni S."/>
            <person name="McWilliam S."/>
            <person name="Madan Babu M."/>
            <person name="Madera M."/>
            <person name="Marchionni L."/>
            <person name="Matsuda H."/>
            <person name="Matsuzawa S."/>
            <person name="Miki H."/>
            <person name="Mignone F."/>
            <person name="Miyake S."/>
            <person name="Morris K."/>
            <person name="Mottagui-Tabar S."/>
            <person name="Mulder N."/>
            <person name="Nakano N."/>
            <person name="Nakauchi H."/>
            <person name="Ng P."/>
            <person name="Nilsson R."/>
            <person name="Nishiguchi S."/>
            <person name="Nishikawa S."/>
            <person name="Nori F."/>
            <person name="Ohara O."/>
            <person name="Okazaki Y."/>
            <person name="Orlando V."/>
            <person name="Pang K.C."/>
            <person name="Pavan W.J."/>
            <person name="Pavesi G."/>
            <person name="Pesole G."/>
            <person name="Petrovsky N."/>
            <person name="Piazza S."/>
            <person name="Reed J."/>
            <person name="Reid J.F."/>
            <person name="Ring B.Z."/>
            <person name="Ringwald M."/>
            <person name="Rost B."/>
            <person name="Ruan Y."/>
            <person name="Salzberg S.L."/>
            <person name="Sandelin A."/>
            <person name="Schneider C."/>
            <person name="Schoenbach C."/>
            <person name="Sekiguchi K."/>
            <person name="Semple C.A."/>
            <person name="Seno S."/>
            <person name="Sessa L."/>
            <person name="Sheng Y."/>
            <person name="Shibata Y."/>
            <person name="Shimada H."/>
            <person name="Shimada K."/>
            <person name="Silva D."/>
            <person name="Sinclair B."/>
            <person name="Sperling S."/>
            <person name="Stupka E."/>
            <person name="Sugiura K."/>
            <person name="Sultana R."/>
            <person name="Takenaka Y."/>
            <person name="Taki K."/>
            <person name="Tammoja K."/>
            <person name="Tan S.L."/>
            <person name="Tang S."/>
            <person name="Taylor M.S."/>
            <person name="Tegner J."/>
            <person name="Teichmann S.A."/>
            <person name="Ueda H.R."/>
            <person name="van Nimwegen E."/>
            <person name="Verardo R."/>
            <person name="Wei C.L."/>
            <person name="Yagi K."/>
            <person name="Yamanishi H."/>
            <person name="Zabarovsky E."/>
            <person name="Zhu S."/>
            <person name="Zimmer A."/>
            <person name="Hide W."/>
            <person name="Bult C."/>
            <person name="Grimmond S.M."/>
            <person name="Teasdale R.D."/>
            <person name="Liu E.T."/>
            <person name="Brusic V."/>
            <person name="Quackenbush J."/>
            <person name="Wahlestedt C."/>
            <person name="Mattick J.S."/>
            <person name="Hume D.A."/>
            <person name="Kai C."/>
            <person name="Sasaki D."/>
            <person name="Tomaru Y."/>
            <person name="Fukuda S."/>
            <person name="Kanamori-Katayama M."/>
            <person name="Suzuki M."/>
            <person name="Aoki J."/>
            <person name="Arakawa T."/>
            <person name="Iida J."/>
            <person name="Imamura K."/>
            <person name="Itoh M."/>
            <person name="Kato T."/>
            <person name="Kawaji H."/>
            <person name="Kawagashira N."/>
            <person name="Kawashima T."/>
            <person name="Kojima M."/>
            <person name="Kondo S."/>
            <person name="Konno H."/>
            <person name="Nakano K."/>
            <person name="Ninomiya N."/>
            <person name="Nishio T."/>
            <person name="Okada M."/>
            <person name="Plessy C."/>
            <person name="Shibata K."/>
            <person name="Shiraki T."/>
            <person name="Suzuki S."/>
            <person name="Tagami M."/>
            <person name="Waki K."/>
            <person name="Watahiki A."/>
            <person name="Okamura-Oho Y."/>
            <person name="Suzuki H."/>
            <person name="Kawai J."/>
            <person name="Hayashizaki Y."/>
        </authorList>
    </citation>
    <scope>NUCLEOTIDE SEQUENCE [LARGE SCALE MRNA]</scope>
    <source>
        <strain>C57BL/6J</strain>
        <tissue>Medulla oblongata</tissue>
    </source>
</reference>
<reference key="3">
    <citation type="journal article" date="2009" name="PLoS Biol.">
        <title>Lineage-specific biology revealed by a finished genome assembly of the mouse.</title>
        <authorList>
            <person name="Church D.M."/>
            <person name="Goodstadt L."/>
            <person name="Hillier L.W."/>
            <person name="Zody M.C."/>
            <person name="Goldstein S."/>
            <person name="She X."/>
            <person name="Bult C.J."/>
            <person name="Agarwala R."/>
            <person name="Cherry J.L."/>
            <person name="DiCuccio M."/>
            <person name="Hlavina W."/>
            <person name="Kapustin Y."/>
            <person name="Meric P."/>
            <person name="Maglott D."/>
            <person name="Birtle Z."/>
            <person name="Marques A.C."/>
            <person name="Graves T."/>
            <person name="Zhou S."/>
            <person name="Teague B."/>
            <person name="Potamousis K."/>
            <person name="Churas C."/>
            <person name="Place M."/>
            <person name="Herschleb J."/>
            <person name="Runnheim R."/>
            <person name="Forrest D."/>
            <person name="Amos-Landgraf J."/>
            <person name="Schwartz D.C."/>
            <person name="Cheng Z."/>
            <person name="Lindblad-Toh K."/>
            <person name="Eichler E.E."/>
            <person name="Ponting C.P."/>
        </authorList>
    </citation>
    <scope>NUCLEOTIDE SEQUENCE [LARGE SCALE GENOMIC DNA]</scope>
    <source>
        <strain>C57BL/6J</strain>
    </source>
</reference>
<reference key="4">
    <citation type="journal article" date="2007" name="Proc. Natl. Acad. Sci. U.S.A.">
        <title>Large-scale phosphorylation analysis of mouse liver.</title>
        <authorList>
            <person name="Villen J."/>
            <person name="Beausoleil S.A."/>
            <person name="Gerber S.A."/>
            <person name="Gygi S.P."/>
        </authorList>
    </citation>
    <scope>IDENTIFICATION BY MASS SPECTROMETRY [LARGE SCALE ANALYSIS]</scope>
    <source>
        <tissue>Liver</tissue>
    </source>
</reference>
<reference key="5">
    <citation type="journal article" date="2010" name="Cell">
        <title>A tissue-specific atlas of mouse protein phosphorylation and expression.</title>
        <authorList>
            <person name="Huttlin E.L."/>
            <person name="Jedrychowski M.P."/>
            <person name="Elias J.E."/>
            <person name="Goswami T."/>
            <person name="Rad R."/>
            <person name="Beausoleil S.A."/>
            <person name="Villen J."/>
            <person name="Haas W."/>
            <person name="Sowa M.E."/>
            <person name="Gygi S.P."/>
        </authorList>
    </citation>
    <scope>PHOSPHORYLATION [LARGE SCALE ANALYSIS] AT SER-103; SER-230; THR-233; SER-234; SER-249 AND SER-257</scope>
    <scope>IDENTIFICATION BY MASS SPECTROMETRY [LARGE SCALE ANALYSIS]</scope>
    <source>
        <tissue>Brown adipose tissue</tissue>
        <tissue>Kidney</tissue>
        <tissue>Liver</tissue>
        <tissue>Lung</tissue>
        <tissue>Pancreas</tissue>
        <tissue>Spleen</tissue>
        <tissue>Testis</tissue>
    </source>
</reference>
<gene>
    <name type="primary">Hexim1</name>
    <name evidence="6" type="synonym">Clp1</name>
</gene>
<evidence type="ECO:0000250" key="1"/>
<evidence type="ECO:0000250" key="2">
    <source>
        <dbReference type="UniProtKB" id="O94992"/>
    </source>
</evidence>
<evidence type="ECO:0000255" key="3"/>
<evidence type="ECO:0000256" key="4">
    <source>
        <dbReference type="SAM" id="MobiDB-lite"/>
    </source>
</evidence>
<evidence type="ECO:0000269" key="5">
    <source>
    </source>
</evidence>
<evidence type="ECO:0000303" key="6">
    <source>
    </source>
</evidence>
<evidence type="ECO:0000305" key="7"/>
<evidence type="ECO:0007744" key="8">
    <source>
    </source>
</evidence>
<dbReference type="EMBL" id="AY090614">
    <property type="protein sequence ID" value="AAM09026.1"/>
    <property type="molecule type" value="mRNA"/>
</dbReference>
<dbReference type="EMBL" id="AK134535">
    <property type="protein sequence ID" value="BAE22173.1"/>
    <property type="molecule type" value="mRNA"/>
</dbReference>
<dbReference type="EMBL" id="AL731805">
    <property type="status" value="NOT_ANNOTATED_CDS"/>
    <property type="molecule type" value="Genomic_DNA"/>
</dbReference>
<dbReference type="CCDS" id="CCDS25513.1"/>
<dbReference type="RefSeq" id="NP_620092.1">
    <property type="nucleotide sequence ID" value="NM_138753.2"/>
</dbReference>
<dbReference type="SMR" id="Q8R409"/>
<dbReference type="BioGRID" id="228682">
    <property type="interactions" value="3"/>
</dbReference>
<dbReference type="FunCoup" id="Q8R409">
    <property type="interactions" value="4281"/>
</dbReference>
<dbReference type="IntAct" id="Q8R409">
    <property type="interactions" value="3"/>
</dbReference>
<dbReference type="STRING" id="10090.ENSMUSP00000057339"/>
<dbReference type="GlyGen" id="Q8R409">
    <property type="glycosylation" value="1 site, 1 O-linked glycan (1 site)"/>
</dbReference>
<dbReference type="iPTMnet" id="Q8R409"/>
<dbReference type="PhosphoSitePlus" id="Q8R409"/>
<dbReference type="SwissPalm" id="Q8R409"/>
<dbReference type="jPOST" id="Q8R409"/>
<dbReference type="PaxDb" id="10090-ENSMUSP00000057339"/>
<dbReference type="PeptideAtlas" id="Q8R409"/>
<dbReference type="ProteomicsDB" id="269704"/>
<dbReference type="Pumba" id="Q8R409"/>
<dbReference type="Antibodypedia" id="1837">
    <property type="antibodies" value="457 antibodies from 39 providers"/>
</dbReference>
<dbReference type="Ensembl" id="ENSMUST00000053063.7">
    <property type="protein sequence ID" value="ENSMUSP00000057339.6"/>
    <property type="gene ID" value="ENSMUSG00000048878.7"/>
</dbReference>
<dbReference type="GeneID" id="192231"/>
<dbReference type="KEGG" id="mmu:192231"/>
<dbReference type="UCSC" id="uc007lto.1">
    <property type="organism name" value="mouse"/>
</dbReference>
<dbReference type="AGR" id="MGI:2385923"/>
<dbReference type="CTD" id="10614"/>
<dbReference type="MGI" id="MGI:2385923">
    <property type="gene designation" value="Hexim1"/>
</dbReference>
<dbReference type="VEuPathDB" id="HostDB:ENSMUSG00000048878"/>
<dbReference type="eggNOG" id="ENOG502QQP8">
    <property type="taxonomic scope" value="Eukaryota"/>
</dbReference>
<dbReference type="GeneTree" id="ENSGT00390000002808"/>
<dbReference type="HOGENOM" id="CLU_066028_0_0_1"/>
<dbReference type="InParanoid" id="Q8R409"/>
<dbReference type="OMA" id="YTLTWEE"/>
<dbReference type="OrthoDB" id="10058500at2759"/>
<dbReference type="PhylomeDB" id="Q8R409"/>
<dbReference type="TreeFam" id="TF336851"/>
<dbReference type="BioGRID-ORCS" id="192231">
    <property type="hits" value="16 hits in 79 CRISPR screens"/>
</dbReference>
<dbReference type="ChiTaRS" id="Hexim1">
    <property type="organism name" value="mouse"/>
</dbReference>
<dbReference type="PRO" id="PR:Q8R409"/>
<dbReference type="Proteomes" id="UP000000589">
    <property type="component" value="Chromosome 11"/>
</dbReference>
<dbReference type="RNAct" id="Q8R409">
    <property type="molecule type" value="protein"/>
</dbReference>
<dbReference type="Bgee" id="ENSMUSG00000048878">
    <property type="expression patterns" value="Expressed in dorsal pancreas and 244 other cell types or tissues"/>
</dbReference>
<dbReference type="GO" id="GO:0120259">
    <property type="term" value="C:7SK snRNP"/>
    <property type="evidence" value="ECO:0007669"/>
    <property type="project" value="Ensembl"/>
</dbReference>
<dbReference type="GO" id="GO:0005737">
    <property type="term" value="C:cytoplasm"/>
    <property type="evidence" value="ECO:0000250"/>
    <property type="project" value="UniProtKB"/>
</dbReference>
<dbReference type="GO" id="GO:0005654">
    <property type="term" value="C:nucleoplasm"/>
    <property type="evidence" value="ECO:0007669"/>
    <property type="project" value="Ensembl"/>
</dbReference>
<dbReference type="GO" id="GO:0005634">
    <property type="term" value="C:nucleus"/>
    <property type="evidence" value="ECO:0000314"/>
    <property type="project" value="MGI"/>
</dbReference>
<dbReference type="GO" id="GO:0097322">
    <property type="term" value="F:7SK snRNA binding"/>
    <property type="evidence" value="ECO:0000250"/>
    <property type="project" value="UniProtKB"/>
</dbReference>
<dbReference type="GO" id="GO:0004861">
    <property type="term" value="F:cyclin-dependent protein serine/threonine kinase inhibitor activity"/>
    <property type="evidence" value="ECO:0000250"/>
    <property type="project" value="UniProtKB"/>
</dbReference>
<dbReference type="GO" id="GO:0042802">
    <property type="term" value="F:identical protein binding"/>
    <property type="evidence" value="ECO:0007669"/>
    <property type="project" value="Ensembl"/>
</dbReference>
<dbReference type="GO" id="GO:0106140">
    <property type="term" value="F:P-TEFb complex binding"/>
    <property type="evidence" value="ECO:0007669"/>
    <property type="project" value="Ensembl"/>
</dbReference>
<dbReference type="GO" id="GO:0017069">
    <property type="term" value="F:snRNA binding"/>
    <property type="evidence" value="ECO:0000250"/>
    <property type="project" value="UniProtKB"/>
</dbReference>
<dbReference type="GO" id="GO:0140416">
    <property type="term" value="F:transcription regulator inhibitor activity"/>
    <property type="evidence" value="ECO:0000250"/>
    <property type="project" value="UniProtKB"/>
</dbReference>
<dbReference type="GO" id="GO:0002218">
    <property type="term" value="P:activation of innate immune response"/>
    <property type="evidence" value="ECO:0007669"/>
    <property type="project" value="Ensembl"/>
</dbReference>
<dbReference type="GO" id="GO:0007507">
    <property type="term" value="P:heart development"/>
    <property type="evidence" value="ECO:0000315"/>
    <property type="project" value="MGI"/>
</dbReference>
<dbReference type="GO" id="GO:0045087">
    <property type="term" value="P:innate immune response"/>
    <property type="evidence" value="ECO:0007669"/>
    <property type="project" value="UniProtKB-KW"/>
</dbReference>
<dbReference type="GO" id="GO:0045892">
    <property type="term" value="P:negative regulation of DNA-templated transcription"/>
    <property type="evidence" value="ECO:0000314"/>
    <property type="project" value="MGI"/>
</dbReference>
<dbReference type="GO" id="GO:0000122">
    <property type="term" value="P:negative regulation of transcription by RNA polymerase II"/>
    <property type="evidence" value="ECO:0007669"/>
    <property type="project" value="Ensembl"/>
</dbReference>
<dbReference type="GO" id="GO:0034244">
    <property type="term" value="P:negative regulation of transcription elongation by RNA polymerase II"/>
    <property type="evidence" value="ECO:0000250"/>
    <property type="project" value="UniProtKB"/>
</dbReference>
<dbReference type="GO" id="GO:0032897">
    <property type="term" value="P:negative regulation of viral transcription"/>
    <property type="evidence" value="ECO:0007669"/>
    <property type="project" value="Ensembl"/>
</dbReference>
<dbReference type="GO" id="GO:1901798">
    <property type="term" value="P:positive regulation of signal transduction by p53 class mediator"/>
    <property type="evidence" value="ECO:0007669"/>
    <property type="project" value="Ensembl"/>
</dbReference>
<dbReference type="Gene3D" id="6.10.250.2910">
    <property type="match status" value="1"/>
</dbReference>
<dbReference type="InterPro" id="IPR024872">
    <property type="entry name" value="HEXIM"/>
</dbReference>
<dbReference type="PANTHER" id="PTHR13469">
    <property type="entry name" value="HEXAMETHYLENE BISACETAMIDE INDUCIBLE 1"/>
    <property type="match status" value="1"/>
</dbReference>
<dbReference type="PANTHER" id="PTHR13469:SF7">
    <property type="entry name" value="PROTEIN HEXIM1"/>
    <property type="match status" value="1"/>
</dbReference>
<dbReference type="Pfam" id="PF15313">
    <property type="entry name" value="HEXIM"/>
    <property type="match status" value="1"/>
</dbReference>
<dbReference type="PRINTS" id="PR02094">
    <property type="entry name" value="HEXIMFAMILY"/>
</dbReference>
<feature type="chain" id="PRO_0000305264" description="Protein HEXIM1">
    <location>
        <begin position="1"/>
        <end position="356"/>
    </location>
</feature>
<feature type="region of interest" description="Disordered" evidence="4">
    <location>
        <begin position="1"/>
        <end position="162"/>
    </location>
</feature>
<feature type="region of interest" description="Basic region; mediates nuclear localization and interaction with 7SK snRNA and NR3C1" evidence="1">
    <location>
        <begin position="147"/>
        <end position="174"/>
    </location>
</feature>
<feature type="region of interest" description="Interaction with P-TEFb" evidence="1">
    <location>
        <begin position="199"/>
        <end position="202"/>
    </location>
</feature>
<feature type="region of interest" description="Autoinhibitory acidic region; in absence of 7SK snRNA interacts with the basic region preventing interaction with P-TEFb and modulating subcellular localization" evidence="1">
    <location>
        <begin position="207"/>
        <end position="247"/>
    </location>
</feature>
<feature type="region of interest" description="Disordered" evidence="4">
    <location>
        <begin position="210"/>
        <end position="259"/>
    </location>
</feature>
<feature type="region of interest" description="Mediates interaction with CCNT1" evidence="1">
    <location>
        <begin position="283"/>
        <end position="311"/>
    </location>
</feature>
<feature type="region of interest" description="Required for inhibition of ESR1-dependent transcription" evidence="1">
    <location>
        <begin position="307"/>
        <end position="352"/>
    </location>
</feature>
<feature type="coiled-coil region" evidence="3">
    <location>
        <begin position="280"/>
        <end position="346"/>
    </location>
</feature>
<feature type="compositionally biased region" description="Basic and acidic residues" evidence="4">
    <location>
        <begin position="1"/>
        <end position="11"/>
    </location>
</feature>
<feature type="compositionally biased region" description="Basic and acidic residues" evidence="4">
    <location>
        <begin position="24"/>
        <end position="47"/>
    </location>
</feature>
<feature type="compositionally biased region" description="Polar residues" evidence="4">
    <location>
        <begin position="48"/>
        <end position="58"/>
    </location>
</feature>
<feature type="compositionally biased region" description="Basic and acidic residues" evidence="4">
    <location>
        <begin position="84"/>
        <end position="93"/>
    </location>
</feature>
<feature type="compositionally biased region" description="Basic residues" evidence="4">
    <location>
        <begin position="145"/>
        <end position="162"/>
    </location>
</feature>
<feature type="compositionally biased region" description="Acidic residues" evidence="4">
    <location>
        <begin position="233"/>
        <end position="248"/>
    </location>
</feature>
<feature type="modified residue" description="Phosphoserine" evidence="2">
    <location>
        <position position="98"/>
    </location>
</feature>
<feature type="modified residue" description="Phosphoserine" evidence="8">
    <location>
        <position position="103"/>
    </location>
</feature>
<feature type="modified residue" description="Phosphoserine" evidence="8">
    <location>
        <position position="230"/>
    </location>
</feature>
<feature type="modified residue" description="Phosphothreonine" evidence="8">
    <location>
        <position position="233"/>
    </location>
</feature>
<feature type="modified residue" description="Phosphoserine" evidence="8">
    <location>
        <position position="234"/>
    </location>
</feature>
<feature type="modified residue" description="Phosphoserine" evidence="8">
    <location>
        <position position="249"/>
    </location>
</feature>
<feature type="modified residue" description="Phosphoserine" evidence="8">
    <location>
        <position position="257"/>
    </location>
</feature>